<protein>
    <recommendedName>
        <fullName>Tagatose 1,6-diphosphate aldolase 1</fullName>
        <ecNumber>4.1.2.40</ecNumber>
    </recommendedName>
    <alternativeName>
        <fullName>D-tagatose-1,6-bisphosphate aldolase 1</fullName>
    </alternativeName>
    <alternativeName>
        <fullName>Tagatose-bisphosphate aldolase 1</fullName>
    </alternativeName>
</protein>
<sequence>MTITANKRHYLEKVSHQGIISALAFDQRGALKQMMAAHQEGEATVTQIETLKVLVSEELTPYASSILLDPEYGLLATKVRANQTGLLLAYEKTGYDATTTSRLPDCLVEWSVKRLKAAGADAIKFLLYYDVDGDEQINLQKQAYIERIGSECTAEDIPFFLELLSYDERISDNNSAAYAKLKPHKVNGAMSVFSDKRFGVDVLKVEVPVNMAYVEGFTEGEVHYSQAEAIKAFQDQEAASHLPYIYLSAGVSAKLFQETLYFAAAAGAQFSGVLCGRATWAGSVPVYITKGEDEARKWLCTEGFQNIDELNRVLEETASPWTEKI</sequence>
<reference key="1">
    <citation type="journal article" date="2001" name="Proc. Natl. Acad. Sci. U.S.A.">
        <title>Complete genome sequence of an M1 strain of Streptococcus pyogenes.</title>
        <authorList>
            <person name="Ferretti J.J."/>
            <person name="McShan W.M."/>
            <person name="Ajdic D.J."/>
            <person name="Savic D.J."/>
            <person name="Savic G."/>
            <person name="Lyon K."/>
            <person name="Primeaux C."/>
            <person name="Sezate S."/>
            <person name="Suvorov A.N."/>
            <person name="Kenton S."/>
            <person name="Lai H.S."/>
            <person name="Lin S.P."/>
            <person name="Qian Y."/>
            <person name="Jia H.G."/>
            <person name="Najar F.Z."/>
            <person name="Ren Q."/>
            <person name="Zhu H."/>
            <person name="Song L."/>
            <person name="White J."/>
            <person name="Yuan X."/>
            <person name="Clifton S.W."/>
            <person name="Roe B.A."/>
            <person name="McLaughlin R.E."/>
        </authorList>
    </citation>
    <scope>NUCLEOTIDE SEQUENCE [LARGE SCALE GENOMIC DNA]</scope>
    <source>
        <strain>ATCC 700294 / SF370 / Serotype M1</strain>
    </source>
</reference>
<reference key="2">
    <citation type="journal article" date="2005" name="J. Infect. Dis.">
        <title>Evolutionary origin and emergence of a highly successful clone of serotype M1 group A Streptococcus involved multiple horizontal gene transfer events.</title>
        <authorList>
            <person name="Sumby P."/>
            <person name="Porcella S.F."/>
            <person name="Madrigal A.G."/>
            <person name="Barbian K.D."/>
            <person name="Virtaneva K."/>
            <person name="Ricklefs S.M."/>
            <person name="Sturdevant D.E."/>
            <person name="Graham M.R."/>
            <person name="Vuopio-Varkila J."/>
            <person name="Hoe N.P."/>
            <person name="Musser J.M."/>
        </authorList>
    </citation>
    <scope>NUCLEOTIDE SEQUENCE [LARGE SCALE GENOMIC DNA]</scope>
    <source>
        <strain>ATCC BAA-947 / MGAS5005 / Serotype M1</strain>
    </source>
</reference>
<evidence type="ECO:0000305" key="1"/>
<evidence type="ECO:0007829" key="2">
    <source>
        <dbReference type="PDB" id="3MYO"/>
    </source>
</evidence>
<gene>
    <name type="primary">lacD1</name>
    <name type="synonym">lacD.1</name>
    <name type="ordered locus">SPy_1704</name>
    <name type="ordered locus">M5005_Spy1395</name>
</gene>
<accession>P63703</accession>
<accession>Q48XB2</accession>
<accession>Q99YH3</accession>
<keyword id="KW-0002">3D-structure</keyword>
<keyword id="KW-0423">Lactose metabolism</keyword>
<keyword id="KW-0456">Lyase</keyword>
<keyword id="KW-1185">Reference proteome</keyword>
<comment type="catalytic activity">
    <reaction>
        <text>D-tagatofuranose 1,6-bisphosphate = D-glyceraldehyde 3-phosphate + dihydroxyacetone phosphate</text>
        <dbReference type="Rhea" id="RHEA:22948"/>
        <dbReference type="ChEBI" id="CHEBI:57642"/>
        <dbReference type="ChEBI" id="CHEBI:58694"/>
        <dbReference type="ChEBI" id="CHEBI:59776"/>
        <dbReference type="EC" id="4.1.2.40"/>
    </reaction>
</comment>
<comment type="pathway">
    <text>Carbohydrate metabolism; D-tagatose 6-phosphate degradation; D-glyceraldehyde 3-phosphate and glycerone phosphate from D-tagatose 6-phosphate: step 2/2.</text>
</comment>
<comment type="similarity">
    <text evidence="1">Belongs to the aldolase LacD family.</text>
</comment>
<organism>
    <name type="scientific">Streptococcus pyogenes serotype M1</name>
    <dbReference type="NCBI Taxonomy" id="301447"/>
    <lineage>
        <taxon>Bacteria</taxon>
        <taxon>Bacillati</taxon>
        <taxon>Bacillota</taxon>
        <taxon>Bacilli</taxon>
        <taxon>Lactobacillales</taxon>
        <taxon>Streptococcaceae</taxon>
        <taxon>Streptococcus</taxon>
    </lineage>
</organism>
<proteinExistence type="evidence at protein level"/>
<feature type="chain" id="PRO_0000203961" description="Tagatose 1,6-diphosphate aldolase 1">
    <location>
        <begin position="1"/>
        <end position="325"/>
    </location>
</feature>
<feature type="helix" evidence="2">
    <location>
        <begin position="5"/>
        <end position="13"/>
    </location>
</feature>
<feature type="strand" evidence="2">
    <location>
        <begin position="19"/>
        <end position="25"/>
    </location>
</feature>
<feature type="helix" evidence="2">
    <location>
        <begin position="29"/>
        <end position="35"/>
    </location>
</feature>
<feature type="turn" evidence="2">
    <location>
        <begin position="36"/>
        <end position="38"/>
    </location>
</feature>
<feature type="strand" evidence="2">
    <location>
        <begin position="39"/>
        <end position="41"/>
    </location>
</feature>
<feature type="helix" evidence="2">
    <location>
        <begin position="45"/>
        <end position="59"/>
    </location>
</feature>
<feature type="helix" evidence="2">
    <location>
        <begin position="60"/>
        <end position="62"/>
    </location>
</feature>
<feature type="strand" evidence="2">
    <location>
        <begin position="64"/>
        <end position="68"/>
    </location>
</feature>
<feature type="turn" evidence="2">
    <location>
        <begin position="70"/>
        <end position="72"/>
    </location>
</feature>
<feature type="helix" evidence="2">
    <location>
        <begin position="74"/>
        <end position="77"/>
    </location>
</feature>
<feature type="strand" evidence="2">
    <location>
        <begin position="85"/>
        <end position="89"/>
    </location>
</feature>
<feature type="helix" evidence="2">
    <location>
        <begin position="112"/>
        <end position="117"/>
    </location>
</feature>
<feature type="strand" evidence="2">
    <location>
        <begin position="121"/>
        <end position="129"/>
    </location>
</feature>
<feature type="helix" evidence="2">
    <location>
        <begin position="135"/>
        <end position="155"/>
    </location>
</feature>
<feature type="strand" evidence="2">
    <location>
        <begin position="159"/>
        <end position="165"/>
    </location>
</feature>
<feature type="helix" evidence="2">
    <location>
        <begin position="176"/>
        <end position="179"/>
    </location>
</feature>
<feature type="helix" evidence="2">
    <location>
        <begin position="182"/>
        <end position="192"/>
    </location>
</feature>
<feature type="helix" evidence="2">
    <location>
        <begin position="196"/>
        <end position="198"/>
    </location>
</feature>
<feature type="strand" evidence="2">
    <location>
        <begin position="201"/>
        <end position="205"/>
    </location>
</feature>
<feature type="helix" evidence="2">
    <location>
        <begin position="211"/>
        <end position="213"/>
    </location>
</feature>
<feature type="helix" evidence="2">
    <location>
        <begin position="226"/>
        <end position="239"/>
    </location>
</feature>
<feature type="strand" evidence="2">
    <location>
        <begin position="244"/>
        <end position="247"/>
    </location>
</feature>
<feature type="helix" evidence="2">
    <location>
        <begin position="253"/>
        <end position="266"/>
    </location>
</feature>
<feature type="strand" evidence="2">
    <location>
        <begin position="272"/>
        <end position="275"/>
    </location>
</feature>
<feature type="helix" evidence="2">
    <location>
        <begin position="277"/>
        <end position="280"/>
    </location>
</feature>
<feature type="helix" evidence="2">
    <location>
        <begin position="283"/>
        <end position="290"/>
    </location>
</feature>
<feature type="helix" evidence="2">
    <location>
        <begin position="292"/>
        <end position="300"/>
    </location>
</feature>
<feature type="helix" evidence="2">
    <location>
        <begin position="302"/>
        <end position="317"/>
    </location>
</feature>
<feature type="helix" evidence="2">
    <location>
        <begin position="321"/>
        <end position="323"/>
    </location>
</feature>
<name>LACD1_STRP1</name>
<dbReference type="EC" id="4.1.2.40"/>
<dbReference type="EMBL" id="AE004092">
    <property type="protein sequence ID" value="AAK34454.1"/>
    <property type="molecule type" value="Genomic_DNA"/>
</dbReference>
<dbReference type="EMBL" id="CP000017">
    <property type="protein sequence ID" value="AAZ52013.1"/>
    <property type="molecule type" value="Genomic_DNA"/>
</dbReference>
<dbReference type="RefSeq" id="NP_269733.1">
    <property type="nucleotide sequence ID" value="NC_002737.2"/>
</dbReference>
<dbReference type="PDB" id="3MYO">
    <property type="method" value="X-ray"/>
    <property type="resolution" value="2.50 A"/>
    <property type="chains" value="A/B=1-325"/>
</dbReference>
<dbReference type="PDBsum" id="3MYO"/>
<dbReference type="SMR" id="P63703"/>
<dbReference type="IntAct" id="P63703">
    <property type="interactions" value="1"/>
</dbReference>
<dbReference type="MINT" id="P63703"/>
<dbReference type="PaxDb" id="1314-HKU360_01449"/>
<dbReference type="KEGG" id="spy:SPy_1704"/>
<dbReference type="KEGG" id="spz:M5005_Spy1395"/>
<dbReference type="PATRIC" id="fig|160490.10.peg.1482"/>
<dbReference type="HOGENOM" id="CLU_058971_0_1_9"/>
<dbReference type="OMA" id="VAWLETT"/>
<dbReference type="UniPathway" id="UPA00704">
    <property type="reaction ID" value="UER00716"/>
</dbReference>
<dbReference type="EvolutionaryTrace" id="P63703"/>
<dbReference type="Proteomes" id="UP000000750">
    <property type="component" value="Chromosome"/>
</dbReference>
<dbReference type="GO" id="GO:0061595">
    <property type="term" value="F:6-deoxy-6-sulfofructose-1-phosphate aldolase activity"/>
    <property type="evidence" value="ECO:0007669"/>
    <property type="project" value="TreeGrafter"/>
</dbReference>
<dbReference type="GO" id="GO:0009024">
    <property type="term" value="F:tagatose-6-phosphate kinase activity"/>
    <property type="evidence" value="ECO:0007669"/>
    <property type="project" value="InterPro"/>
</dbReference>
<dbReference type="GO" id="GO:0009025">
    <property type="term" value="F:tagatose-bisphosphate aldolase activity"/>
    <property type="evidence" value="ECO:0007669"/>
    <property type="project" value="UniProtKB-UniRule"/>
</dbReference>
<dbReference type="GO" id="GO:1902777">
    <property type="term" value="P:6-sulfoquinovose(1-) catabolic process"/>
    <property type="evidence" value="ECO:0007669"/>
    <property type="project" value="TreeGrafter"/>
</dbReference>
<dbReference type="GO" id="GO:2001059">
    <property type="term" value="P:D-tagatose 6-phosphate catabolic process"/>
    <property type="evidence" value="ECO:0007669"/>
    <property type="project" value="UniProtKB-UniRule"/>
</dbReference>
<dbReference type="GO" id="GO:0019512">
    <property type="term" value="P:lactose catabolic process via tagatose-6-phosphate"/>
    <property type="evidence" value="ECO:0007669"/>
    <property type="project" value="InterPro"/>
</dbReference>
<dbReference type="FunFam" id="3.20.20.70:FF:000137">
    <property type="entry name" value="Tagatose 1,6-diphosphate aldolase 2"/>
    <property type="match status" value="1"/>
</dbReference>
<dbReference type="Gene3D" id="3.20.20.70">
    <property type="entry name" value="Aldolase class I"/>
    <property type="match status" value="1"/>
</dbReference>
<dbReference type="HAMAP" id="MF_00734">
    <property type="entry name" value="LacD"/>
    <property type="match status" value="1"/>
</dbReference>
<dbReference type="InterPro" id="IPR013785">
    <property type="entry name" value="Aldolase_TIM"/>
</dbReference>
<dbReference type="InterPro" id="IPR002915">
    <property type="entry name" value="DeoC/FbaB/LacD_aldolase"/>
</dbReference>
<dbReference type="InterPro" id="IPR050552">
    <property type="entry name" value="LacD_aldolase"/>
</dbReference>
<dbReference type="InterPro" id="IPR005927">
    <property type="entry name" value="Tag_1.6-dipho_adolase"/>
</dbReference>
<dbReference type="NCBIfam" id="TIGR01232">
    <property type="entry name" value="lacD"/>
    <property type="match status" value="1"/>
</dbReference>
<dbReference type="NCBIfam" id="NF003180">
    <property type="entry name" value="PRK04161.1"/>
    <property type="match status" value="1"/>
</dbReference>
<dbReference type="NCBIfam" id="NF009065">
    <property type="entry name" value="PRK12399.1"/>
    <property type="match status" value="1"/>
</dbReference>
<dbReference type="NCBIfam" id="NF009498">
    <property type="entry name" value="PRK12858.1"/>
    <property type="match status" value="1"/>
</dbReference>
<dbReference type="PANTHER" id="PTHR39340">
    <property type="entry name" value="SULFOFRUCTOSEPHOSPHATE ALDOLASE"/>
    <property type="match status" value="1"/>
</dbReference>
<dbReference type="PANTHER" id="PTHR39340:SF1">
    <property type="entry name" value="SULFOFRUCTOSEPHOSPHATE ALDOLASE"/>
    <property type="match status" value="1"/>
</dbReference>
<dbReference type="Pfam" id="PF01791">
    <property type="entry name" value="DeoC"/>
    <property type="match status" value="1"/>
</dbReference>
<dbReference type="SMART" id="SM01133">
    <property type="entry name" value="DeoC"/>
    <property type="match status" value="1"/>
</dbReference>
<dbReference type="SUPFAM" id="SSF51569">
    <property type="entry name" value="Aldolase"/>
    <property type="match status" value="1"/>
</dbReference>